<protein>
    <recommendedName>
        <fullName evidence="1">Geranylgeranyl pyrophosphate synthase paxG</fullName>
        <shortName evidence="7">GGPP synthase</shortName>
        <shortName evidence="7">GGPPSase</shortName>
        <ecNumber evidence="7">2.5.1.-</ecNumber>
    </recommendedName>
    <alternativeName>
        <fullName evidence="1">(2E,6E)-farnesyl diphosphate synthase</fullName>
    </alternativeName>
    <alternativeName>
        <fullName evidence="1">Dimethylallyltranstransferase</fullName>
        <ecNumber evidence="1">2.5.1.1</ecNumber>
    </alternativeName>
    <alternativeName>
        <fullName evidence="1">Farnesyl diphosphate synthase</fullName>
    </alternativeName>
    <alternativeName>
        <fullName evidence="1">Farnesyltranstransferase</fullName>
        <ecNumber evidence="1">2.5.1.29</ecNumber>
    </alternativeName>
    <alternativeName>
        <fullName evidence="1">Geranylgeranyl diphosphate synthase</fullName>
    </alternativeName>
    <alternativeName>
        <fullName evidence="1">Geranyltranstransferase</fullName>
        <ecNumber evidence="1">2.5.1.10</ecNumber>
    </alternativeName>
    <alternativeName>
        <fullName evidence="6">Paxilline synthesis protein G</fullName>
    </alternativeName>
</protein>
<name>PAXG_PENPX</name>
<feature type="chain" id="PRO_0000436115" description="Geranylgeranyl pyrophosphate synthase paxG">
    <location>
        <begin position="1"/>
        <end position="371"/>
    </location>
</feature>
<feature type="short sequence motif" description="Peroxisomal targeting signal" evidence="4">
    <location>
        <begin position="369"/>
        <end position="371"/>
    </location>
</feature>
<feature type="binding site" evidence="1">
    <location>
        <position position="89"/>
    </location>
    <ligand>
        <name>isopentenyl diphosphate</name>
        <dbReference type="ChEBI" id="CHEBI:128769"/>
    </ligand>
</feature>
<feature type="binding site" evidence="1">
    <location>
        <position position="92"/>
    </location>
    <ligand>
        <name>isopentenyl diphosphate</name>
        <dbReference type="ChEBI" id="CHEBI:128769"/>
    </ligand>
</feature>
<feature type="binding site" evidence="1">
    <location>
        <position position="121"/>
    </location>
    <ligand>
        <name>isopentenyl diphosphate</name>
        <dbReference type="ChEBI" id="CHEBI:128769"/>
    </ligand>
</feature>
<feature type="binding site" evidence="1">
    <location>
        <position position="128"/>
    </location>
    <ligand>
        <name>Mg(2+)</name>
        <dbReference type="ChEBI" id="CHEBI:18420"/>
        <label>1</label>
    </ligand>
</feature>
<feature type="binding site" evidence="1">
    <location>
        <position position="128"/>
    </location>
    <ligand>
        <name>Mg(2+)</name>
        <dbReference type="ChEBI" id="CHEBI:18420"/>
        <label>2</label>
    </ligand>
</feature>
<feature type="binding site" evidence="1">
    <location>
        <position position="132"/>
    </location>
    <ligand>
        <name>Mg(2+)</name>
        <dbReference type="ChEBI" id="CHEBI:18420"/>
        <label>1</label>
    </ligand>
</feature>
<feature type="binding site" evidence="1">
    <location>
        <position position="132"/>
    </location>
    <ligand>
        <name>Mg(2+)</name>
        <dbReference type="ChEBI" id="CHEBI:18420"/>
        <label>2</label>
    </ligand>
</feature>
<feature type="binding site" evidence="1">
    <location>
        <position position="137"/>
    </location>
    <ligand>
        <name>dimethylallyl diphosphate</name>
        <dbReference type="ChEBI" id="CHEBI:57623"/>
    </ligand>
</feature>
<feature type="binding site" evidence="1">
    <location>
        <position position="138"/>
    </location>
    <ligand>
        <name>isopentenyl diphosphate</name>
        <dbReference type="ChEBI" id="CHEBI:128769"/>
    </ligand>
</feature>
<feature type="binding site" evidence="1">
    <location>
        <position position="215"/>
    </location>
    <ligand>
        <name>dimethylallyl diphosphate</name>
        <dbReference type="ChEBI" id="CHEBI:57623"/>
    </ligand>
</feature>
<feature type="binding site" evidence="1">
    <location>
        <position position="216"/>
    </location>
    <ligand>
        <name>dimethylallyl diphosphate</name>
        <dbReference type="ChEBI" id="CHEBI:57623"/>
    </ligand>
</feature>
<feature type="binding site" evidence="1">
    <location>
        <position position="249"/>
    </location>
    <ligand>
        <name>dimethylallyl diphosphate</name>
        <dbReference type="ChEBI" id="CHEBI:57623"/>
    </ligand>
</feature>
<feature type="binding site" evidence="1">
    <location>
        <position position="252"/>
    </location>
    <ligand>
        <name>Mg(2+)</name>
        <dbReference type="ChEBI" id="CHEBI:18420"/>
        <label>3</label>
    </ligand>
</feature>
<feature type="binding site" evidence="1">
    <location>
        <position position="256"/>
    </location>
    <ligand>
        <name>dimethylallyl diphosphate</name>
        <dbReference type="ChEBI" id="CHEBI:57623"/>
    </ligand>
</feature>
<feature type="binding site" evidence="1">
    <location>
        <position position="266"/>
    </location>
    <ligand>
        <name>dimethylallyl diphosphate</name>
        <dbReference type="ChEBI" id="CHEBI:57623"/>
    </ligand>
</feature>
<feature type="binding site" evidence="1">
    <location>
        <position position="276"/>
    </location>
    <ligand>
        <name>dimethylallyl diphosphate</name>
        <dbReference type="ChEBI" id="CHEBI:57623"/>
    </ligand>
</feature>
<feature type="site" description="Important for determining product chain length" evidence="1">
    <location>
        <position position="160"/>
    </location>
</feature>
<organism>
    <name type="scientific">Penicillium paxilli</name>
    <dbReference type="NCBI Taxonomy" id="70109"/>
    <lineage>
        <taxon>Eukaryota</taxon>
        <taxon>Fungi</taxon>
        <taxon>Dikarya</taxon>
        <taxon>Ascomycota</taxon>
        <taxon>Pezizomycotina</taxon>
        <taxon>Eurotiomycetes</taxon>
        <taxon>Eurotiomycetidae</taxon>
        <taxon>Eurotiales</taxon>
        <taxon>Aspergillaceae</taxon>
        <taxon>Penicillium</taxon>
    </lineage>
</organism>
<proteinExistence type="inferred from homology"/>
<dbReference type="EC" id="2.5.1.-" evidence="7"/>
<dbReference type="EC" id="2.5.1.1" evidence="1"/>
<dbReference type="EC" id="2.5.1.29" evidence="1"/>
<dbReference type="EC" id="2.5.1.10" evidence="1"/>
<dbReference type="EMBL" id="HM171111">
    <property type="protein sequence ID" value="AAK11531.1"/>
    <property type="molecule type" value="Genomic_DNA"/>
</dbReference>
<dbReference type="SMR" id="Q9C446"/>
<dbReference type="BioCyc" id="MetaCyc:MONOMER-18634"/>
<dbReference type="GO" id="GO:0005777">
    <property type="term" value="C:peroxisome"/>
    <property type="evidence" value="ECO:0007669"/>
    <property type="project" value="UniProtKB-SubCell"/>
</dbReference>
<dbReference type="GO" id="GO:0004337">
    <property type="term" value="F:(2E,6E)-farnesyl diphosphate synthase activity"/>
    <property type="evidence" value="ECO:0007669"/>
    <property type="project" value="UniProtKB-EC"/>
</dbReference>
<dbReference type="GO" id="GO:0004161">
    <property type="term" value="F:dimethylallyltranstransferase activity"/>
    <property type="evidence" value="ECO:0007669"/>
    <property type="project" value="UniProtKB-EC"/>
</dbReference>
<dbReference type="GO" id="GO:0004311">
    <property type="term" value="F:geranylgeranyl diphosphate synthase activity"/>
    <property type="evidence" value="ECO:0007669"/>
    <property type="project" value="UniProtKB-EC"/>
</dbReference>
<dbReference type="GO" id="GO:0046872">
    <property type="term" value="F:metal ion binding"/>
    <property type="evidence" value="ECO:0007669"/>
    <property type="project" value="UniProtKB-KW"/>
</dbReference>
<dbReference type="GO" id="GO:0140873">
    <property type="term" value="P:paxilline biosynthetic process"/>
    <property type="evidence" value="ECO:0000315"/>
    <property type="project" value="GO_Central"/>
</dbReference>
<dbReference type="CDD" id="cd00685">
    <property type="entry name" value="Trans_IPPS_HT"/>
    <property type="match status" value="1"/>
</dbReference>
<dbReference type="Gene3D" id="1.10.600.10">
    <property type="entry name" value="Farnesyl Diphosphate Synthase"/>
    <property type="match status" value="1"/>
</dbReference>
<dbReference type="InterPro" id="IPR008949">
    <property type="entry name" value="Isoprenoid_synthase_dom_sf"/>
</dbReference>
<dbReference type="InterPro" id="IPR000092">
    <property type="entry name" value="Polyprenyl_synt"/>
</dbReference>
<dbReference type="InterPro" id="IPR033749">
    <property type="entry name" value="Polyprenyl_synt_CS"/>
</dbReference>
<dbReference type="PANTHER" id="PTHR12001">
    <property type="entry name" value="GERANYLGERANYL PYROPHOSPHATE SYNTHASE"/>
    <property type="match status" value="1"/>
</dbReference>
<dbReference type="PANTHER" id="PTHR12001:SF70">
    <property type="entry name" value="PYROPHOSPHATE SYNTHETASE ATMG, PUTATIVE (AFU_ORTHOLOGUE AFUA_8G02400)-RELATED"/>
    <property type="match status" value="1"/>
</dbReference>
<dbReference type="Pfam" id="PF00348">
    <property type="entry name" value="polyprenyl_synt"/>
    <property type="match status" value="1"/>
</dbReference>
<dbReference type="SFLD" id="SFLDS00005">
    <property type="entry name" value="Isoprenoid_Synthase_Type_I"/>
    <property type="match status" value="1"/>
</dbReference>
<dbReference type="SUPFAM" id="SSF48576">
    <property type="entry name" value="Terpenoid synthases"/>
    <property type="match status" value="1"/>
</dbReference>
<dbReference type="PROSITE" id="PS00723">
    <property type="entry name" value="POLYPRENYL_SYNTHASE_1"/>
    <property type="match status" value="1"/>
</dbReference>
<dbReference type="PROSITE" id="PS00444">
    <property type="entry name" value="POLYPRENYL_SYNTHASE_2"/>
    <property type="match status" value="1"/>
</dbReference>
<evidence type="ECO:0000250" key="1">
    <source>
        <dbReference type="UniProtKB" id="Q12051"/>
    </source>
</evidence>
<evidence type="ECO:0000269" key="2">
    <source>
    </source>
</evidence>
<evidence type="ECO:0000269" key="3">
    <source>
    </source>
</evidence>
<evidence type="ECO:0000269" key="4">
    <source>
    </source>
</evidence>
<evidence type="ECO:0000269" key="5">
    <source>
    </source>
</evidence>
<evidence type="ECO:0000303" key="6">
    <source>
    </source>
</evidence>
<evidence type="ECO:0000305" key="7"/>
<evidence type="ECO:0000305" key="8">
    <source>
    </source>
</evidence>
<evidence type="ECO:0000305" key="9">
    <source>
    </source>
</evidence>
<gene>
    <name evidence="6" type="primary">paxG</name>
</gene>
<accession>Q9C446</accession>
<keyword id="KW-0414">Isoprene biosynthesis</keyword>
<keyword id="KW-0460">Magnesium</keyword>
<keyword id="KW-0479">Metal-binding</keyword>
<keyword id="KW-0576">Peroxisome</keyword>
<keyword id="KW-0808">Transferase</keyword>
<comment type="function">
    <text evidence="2 3 4 5">Geranylgeranyl pyrophosphate synthase; part of the gene cluster that mediates the biosynthesis of paxilline, a mycotoxin that acts as an inhibitor of mammalian maxi-K channels (PubMed:11169115, PubMed:16494875, PubMed:19529962, PubMed:23949005). PaxG, the geranylgeranyl diphosphate (GGPP) synthase is proposed to catalyze the first step in paxilline biosynthesis (PubMed:16494875, PubMed:19529962, PubMed:23949005). Condensation of indole-3-glycerol phosphate with GGPP by paxC then forms 3-geranylgeranylindole (3-GGI), followed by epoxidation and cyclization of this intermediate (by paxM and paxB) to form paspaline (PubMed:16494875, PubMed:23949005). Paspaline is subsequently converted to 13-desoxypaxilline by paxP, the latter being then converted to paxilline by paxQ (PubMed:23949005). Finally paxilline can be mono- and di-prenylated by paxD (PubMed:23949005).</text>
</comment>
<comment type="catalytic activity">
    <reaction evidence="1">
        <text>isopentenyl diphosphate + dimethylallyl diphosphate = (2E)-geranyl diphosphate + diphosphate</text>
        <dbReference type="Rhea" id="RHEA:22408"/>
        <dbReference type="ChEBI" id="CHEBI:33019"/>
        <dbReference type="ChEBI" id="CHEBI:57623"/>
        <dbReference type="ChEBI" id="CHEBI:58057"/>
        <dbReference type="ChEBI" id="CHEBI:128769"/>
        <dbReference type="EC" id="2.5.1.1"/>
    </reaction>
</comment>
<comment type="catalytic activity">
    <reaction evidence="1">
        <text>isopentenyl diphosphate + (2E)-geranyl diphosphate = (2E,6E)-farnesyl diphosphate + diphosphate</text>
        <dbReference type="Rhea" id="RHEA:19361"/>
        <dbReference type="ChEBI" id="CHEBI:33019"/>
        <dbReference type="ChEBI" id="CHEBI:58057"/>
        <dbReference type="ChEBI" id="CHEBI:128769"/>
        <dbReference type="ChEBI" id="CHEBI:175763"/>
        <dbReference type="EC" id="2.5.1.10"/>
    </reaction>
</comment>
<comment type="catalytic activity">
    <reaction evidence="1">
        <text>isopentenyl diphosphate + (2E,6E)-farnesyl diphosphate = (2E,6E,10E)-geranylgeranyl diphosphate + diphosphate</text>
        <dbReference type="Rhea" id="RHEA:17653"/>
        <dbReference type="ChEBI" id="CHEBI:33019"/>
        <dbReference type="ChEBI" id="CHEBI:58756"/>
        <dbReference type="ChEBI" id="CHEBI:128769"/>
        <dbReference type="ChEBI" id="CHEBI:175763"/>
        <dbReference type="EC" id="2.5.1.29"/>
    </reaction>
</comment>
<comment type="cofactor">
    <cofactor evidence="1">
        <name>Mg(2+)</name>
        <dbReference type="ChEBI" id="CHEBI:18420"/>
    </cofactor>
    <text evidence="1">Binds 3 Mg(2+) ions per subunit.</text>
</comment>
<comment type="pathway">
    <text evidence="3 4 8 9">Secondary metabolite biosynthesis.</text>
</comment>
<comment type="subcellular location">
    <subcellularLocation>
        <location evidence="4">Peroxisome</location>
    </subcellularLocation>
</comment>
<comment type="disruption phenotype">
    <text evidence="2 5">Impairs the production of paxilline (PubMed:11169115, PubMed:23949005).</text>
</comment>
<comment type="similarity">
    <text evidence="7">Belongs to the FPP/GGPP synthase family.</text>
</comment>
<sequence>MSYILAEALNFVRRGISHLNYWGASHSLSADNYWESNFQGFPRLLSDSSKAPSTIRTVQVLEDDVDDIAIQYNKIVRGPLDYLLAIPGKDIRSKLIDSFNIWLQLPEEKLSIVKDIINLLHTASLLIDDIQDASRLRRGKPVAHDVYGVAQTINSANYAYYLQQARLKEIGDPRAFEIFTRSLLDLHLGQGMDLYWRDMVVCPTEEEYTRMVMYKTGGLFNLALDLMRIQSRKNTDFSKLVELLGVIFQIRDDYMNLQSGLYAEKKGLMEDLTEGKFSYPIIHSIRASPESSELLDILKQRTEDEAVKIRAVKIMESTGSFQYTRETLSRLSAEARGYVKKLETSLGPNPGIHKILDLLEVEYPTNEKGRV</sequence>
<reference key="1">
    <citation type="journal article" date="2001" name="Mol. Microbiol.">
        <title>Molecular cloning and genetic analysis of an indole-diterpene gene cluster from Penicillium paxilli.</title>
        <authorList>
            <person name="Young C."/>
            <person name="McMillan L."/>
            <person name="Telfer E."/>
            <person name="Scott B."/>
        </authorList>
    </citation>
    <scope>NUCLEOTIDE SEQUENCE [GENOMIC DNA]</scope>
    <scope>FUNCTION</scope>
    <scope>DISRUPTION PHENOTYPE</scope>
    <source>
        <strain>PN2013</strain>
    </source>
</reference>
<reference key="2">
    <citation type="journal article" date="2013" name="Toxins">
        <title>Deletion and gene expression analyses define the paxilline biosynthetic gene cluster in Penicillium paxilli.</title>
        <authorList>
            <person name="Scott B."/>
            <person name="Young C.A."/>
            <person name="Saikia S."/>
            <person name="McMillan L.K."/>
            <person name="Monahan B.J."/>
            <person name="Koulman A."/>
            <person name="Astin J."/>
            <person name="Eaton C.J."/>
            <person name="Bryant A."/>
            <person name="Wrenn R.E."/>
            <person name="Finch S.C."/>
            <person name="Tapper B.A."/>
            <person name="Parker E.J."/>
            <person name="Jameson G.B."/>
        </authorList>
    </citation>
    <scope>NUCLEOTIDE SEQUENCE [GENOMIC DNA]</scope>
    <scope>FUNCTION</scope>
    <scope>DISRUPTION PHENOTYPE</scope>
    <source>
        <strain>PN2013</strain>
    </source>
</reference>
<reference key="3">
    <citation type="journal article" date="2006" name="FEBS Lett.">
        <title>Four gene products are required for the fungal synthesis of the indole-diterpene, paspaline.</title>
        <authorList>
            <person name="Saikia S."/>
            <person name="Parker E.J."/>
            <person name="Koulman A."/>
            <person name="Scott B."/>
        </authorList>
    </citation>
    <scope>FUNCTION</scope>
</reference>
<reference key="4">
    <citation type="journal article" date="2009" name="Mol. Genet. Genomics">
        <title>Functional analysis and subcellular localization of two geranylgeranyl diphosphate synthases from Penicillium paxilli.</title>
        <authorList>
            <person name="Saikia S."/>
            <person name="Scott B."/>
        </authorList>
    </citation>
    <scope>FUNCTION</scope>
    <scope>SUBCELLULAR LOCATION</scope>
    <scope>PEROXISOMAL TARGETING SIGNAL</scope>
</reference>